<dbReference type="EMBL" id="AC007258">
    <property type="protein sequence ID" value="AAD39328.1"/>
    <property type="molecule type" value="Genomic_DNA"/>
</dbReference>
<dbReference type="EMBL" id="CP002684">
    <property type="protein sequence ID" value="AEE33629.1"/>
    <property type="molecule type" value="Genomic_DNA"/>
</dbReference>
<dbReference type="EMBL" id="AK175148">
    <property type="protein sequence ID" value="BAD42911.1"/>
    <property type="molecule type" value="mRNA"/>
</dbReference>
<dbReference type="EMBL" id="AK175265">
    <property type="protein sequence ID" value="BAD43028.1"/>
    <property type="molecule type" value="mRNA"/>
</dbReference>
<dbReference type="EMBL" id="BT024694">
    <property type="protein sequence ID" value="ABD57519.1"/>
    <property type="molecule type" value="mRNA"/>
</dbReference>
<dbReference type="EMBL" id="AY087202">
    <property type="protein sequence ID" value="AAM64758.1"/>
    <property type="molecule type" value="mRNA"/>
</dbReference>
<dbReference type="PIR" id="G96622">
    <property type="entry name" value="G96622"/>
</dbReference>
<dbReference type="RefSeq" id="NP_176195.1">
    <property type="nucleotide sequence ID" value="NM_104679.4"/>
</dbReference>
<dbReference type="SMR" id="Q9XIE3"/>
<dbReference type="BioGRID" id="27505">
    <property type="interactions" value="1"/>
</dbReference>
<dbReference type="FunCoup" id="Q9XIE3">
    <property type="interactions" value="190"/>
</dbReference>
<dbReference type="STRING" id="3702.Q9XIE3"/>
<dbReference type="PaxDb" id="3702-AT1G59860.1"/>
<dbReference type="ProteomicsDB" id="232128"/>
<dbReference type="EnsemblPlants" id="AT1G59860.1">
    <property type="protein sequence ID" value="AT1G59860.1"/>
    <property type="gene ID" value="AT1G59860"/>
</dbReference>
<dbReference type="GeneID" id="842280"/>
<dbReference type="Gramene" id="AT1G59860.1">
    <property type="protein sequence ID" value="AT1G59860.1"/>
    <property type="gene ID" value="AT1G59860"/>
</dbReference>
<dbReference type="KEGG" id="ath:AT1G59860"/>
<dbReference type="Araport" id="AT1G59860"/>
<dbReference type="TAIR" id="AT1G59860">
    <property type="gene designation" value="HSP17.6A"/>
</dbReference>
<dbReference type="eggNOG" id="KOG0710">
    <property type="taxonomic scope" value="Eukaryota"/>
</dbReference>
<dbReference type="HOGENOM" id="CLU_046737_5_0_1"/>
<dbReference type="InParanoid" id="Q9XIE3"/>
<dbReference type="OMA" id="NDAWHRV"/>
<dbReference type="OrthoDB" id="5511210at2759"/>
<dbReference type="PhylomeDB" id="Q9XIE3"/>
<dbReference type="PRO" id="PR:Q9XIE3"/>
<dbReference type="Proteomes" id="UP000006548">
    <property type="component" value="Chromosome 1"/>
</dbReference>
<dbReference type="ExpressionAtlas" id="Q9XIE3">
    <property type="expression patterns" value="baseline and differential"/>
</dbReference>
<dbReference type="GO" id="GO:0005737">
    <property type="term" value="C:cytoplasm"/>
    <property type="evidence" value="ECO:0007669"/>
    <property type="project" value="UniProtKB-SubCell"/>
</dbReference>
<dbReference type="GO" id="GO:0071456">
    <property type="term" value="P:cellular response to hypoxia"/>
    <property type="evidence" value="ECO:0007007"/>
    <property type="project" value="TAIR"/>
</dbReference>
<dbReference type="GO" id="GO:0051259">
    <property type="term" value="P:protein complex oligomerization"/>
    <property type="evidence" value="ECO:0000314"/>
    <property type="project" value="UniProtKB"/>
</dbReference>
<dbReference type="GO" id="GO:0006457">
    <property type="term" value="P:protein folding"/>
    <property type="evidence" value="ECO:0000314"/>
    <property type="project" value="UniProtKB"/>
</dbReference>
<dbReference type="GO" id="GO:0009408">
    <property type="term" value="P:response to heat"/>
    <property type="evidence" value="ECO:0000270"/>
    <property type="project" value="UniProtKB"/>
</dbReference>
<dbReference type="GO" id="GO:0006970">
    <property type="term" value="P:response to osmotic stress"/>
    <property type="evidence" value="ECO:0000270"/>
    <property type="project" value="UniProtKB"/>
</dbReference>
<dbReference type="GO" id="GO:0009651">
    <property type="term" value="P:response to salt stress"/>
    <property type="evidence" value="ECO:0000314"/>
    <property type="project" value="UniProtKB"/>
</dbReference>
<dbReference type="CDD" id="cd06472">
    <property type="entry name" value="ACD_ScHsp26_like"/>
    <property type="match status" value="1"/>
</dbReference>
<dbReference type="FunFam" id="2.60.40.790:FF:000009">
    <property type="entry name" value="17.6 kDa class I heat shock protein-like"/>
    <property type="match status" value="1"/>
</dbReference>
<dbReference type="Gene3D" id="2.60.40.790">
    <property type="match status" value="1"/>
</dbReference>
<dbReference type="InterPro" id="IPR002068">
    <property type="entry name" value="A-crystallin/Hsp20_dom"/>
</dbReference>
<dbReference type="InterPro" id="IPR008978">
    <property type="entry name" value="HSP20-like_chaperone"/>
</dbReference>
<dbReference type="InterPro" id="IPR031107">
    <property type="entry name" value="Small_HSP"/>
</dbReference>
<dbReference type="PANTHER" id="PTHR11527">
    <property type="entry name" value="HEAT-SHOCK PROTEIN 20 FAMILY MEMBER"/>
    <property type="match status" value="1"/>
</dbReference>
<dbReference type="Pfam" id="PF00011">
    <property type="entry name" value="HSP20"/>
    <property type="match status" value="1"/>
</dbReference>
<dbReference type="SUPFAM" id="SSF49764">
    <property type="entry name" value="HSP20-like chaperones"/>
    <property type="match status" value="1"/>
</dbReference>
<dbReference type="PROSITE" id="PS01031">
    <property type="entry name" value="SHSP"/>
    <property type="match status" value="1"/>
</dbReference>
<accession>Q9XIE3</accession>
<accession>Q8LBH7</accession>
<sequence length="155" mass="17624">MSLIPSFFGNNRRINNNIFDPFSLDVWDPFKELQFPSSSSSAIANARVDWKETAEAHVFKADLPGMKKEEVKVEIEDDSVLKISGERHVEKEEKQDTWHRVERSSGGFSRKFRLPENVKMDQVKASMENGVLTVTVPKVETNKKKAQVKSIDISG</sequence>
<reference key="1">
    <citation type="journal article" date="2000" name="Nature">
        <title>Sequence and analysis of chromosome 1 of the plant Arabidopsis thaliana.</title>
        <authorList>
            <person name="Theologis A."/>
            <person name="Ecker J.R."/>
            <person name="Palm C.J."/>
            <person name="Federspiel N.A."/>
            <person name="Kaul S."/>
            <person name="White O."/>
            <person name="Alonso J."/>
            <person name="Altafi H."/>
            <person name="Araujo R."/>
            <person name="Bowman C.L."/>
            <person name="Brooks S.Y."/>
            <person name="Buehler E."/>
            <person name="Chan A."/>
            <person name="Chao Q."/>
            <person name="Chen H."/>
            <person name="Cheuk R.F."/>
            <person name="Chin C.W."/>
            <person name="Chung M.K."/>
            <person name="Conn L."/>
            <person name="Conway A.B."/>
            <person name="Conway A.R."/>
            <person name="Creasy T.H."/>
            <person name="Dewar K."/>
            <person name="Dunn P."/>
            <person name="Etgu P."/>
            <person name="Feldblyum T.V."/>
            <person name="Feng J.-D."/>
            <person name="Fong B."/>
            <person name="Fujii C.Y."/>
            <person name="Gill J.E."/>
            <person name="Goldsmith A.D."/>
            <person name="Haas B."/>
            <person name="Hansen N.F."/>
            <person name="Hughes B."/>
            <person name="Huizar L."/>
            <person name="Hunter J.L."/>
            <person name="Jenkins J."/>
            <person name="Johnson-Hopson C."/>
            <person name="Khan S."/>
            <person name="Khaykin E."/>
            <person name="Kim C.J."/>
            <person name="Koo H.L."/>
            <person name="Kremenetskaia I."/>
            <person name="Kurtz D.B."/>
            <person name="Kwan A."/>
            <person name="Lam B."/>
            <person name="Langin-Hooper S."/>
            <person name="Lee A."/>
            <person name="Lee J.M."/>
            <person name="Lenz C.A."/>
            <person name="Li J.H."/>
            <person name="Li Y.-P."/>
            <person name="Lin X."/>
            <person name="Liu S.X."/>
            <person name="Liu Z.A."/>
            <person name="Luros J.S."/>
            <person name="Maiti R."/>
            <person name="Marziali A."/>
            <person name="Militscher J."/>
            <person name="Miranda M."/>
            <person name="Nguyen M."/>
            <person name="Nierman W.C."/>
            <person name="Osborne B.I."/>
            <person name="Pai G."/>
            <person name="Peterson J."/>
            <person name="Pham P.K."/>
            <person name="Rizzo M."/>
            <person name="Rooney T."/>
            <person name="Rowley D."/>
            <person name="Sakano H."/>
            <person name="Salzberg S.L."/>
            <person name="Schwartz J.R."/>
            <person name="Shinn P."/>
            <person name="Southwick A.M."/>
            <person name="Sun H."/>
            <person name="Tallon L.J."/>
            <person name="Tambunga G."/>
            <person name="Toriumi M.J."/>
            <person name="Town C.D."/>
            <person name="Utterback T."/>
            <person name="Van Aken S."/>
            <person name="Vaysberg M."/>
            <person name="Vysotskaia V.S."/>
            <person name="Walker M."/>
            <person name="Wu D."/>
            <person name="Yu G."/>
            <person name="Fraser C.M."/>
            <person name="Venter J.C."/>
            <person name="Davis R.W."/>
        </authorList>
    </citation>
    <scope>NUCLEOTIDE SEQUENCE [LARGE SCALE GENOMIC DNA]</scope>
    <source>
        <strain>cv. Columbia</strain>
    </source>
</reference>
<reference key="2">
    <citation type="journal article" date="2017" name="Plant J.">
        <title>Araport11: a complete reannotation of the Arabidopsis thaliana reference genome.</title>
        <authorList>
            <person name="Cheng C.Y."/>
            <person name="Krishnakumar V."/>
            <person name="Chan A.P."/>
            <person name="Thibaud-Nissen F."/>
            <person name="Schobel S."/>
            <person name="Town C.D."/>
        </authorList>
    </citation>
    <scope>GENOME REANNOTATION</scope>
    <source>
        <strain>cv. Columbia</strain>
    </source>
</reference>
<reference key="3">
    <citation type="submission" date="2004-09" db="EMBL/GenBank/DDBJ databases">
        <title>Large-scale analysis of RIKEN Arabidopsis full-length (RAFL) cDNAs.</title>
        <authorList>
            <person name="Totoki Y."/>
            <person name="Seki M."/>
            <person name="Ishida J."/>
            <person name="Nakajima M."/>
            <person name="Enju A."/>
            <person name="Kamiya A."/>
            <person name="Narusaka M."/>
            <person name="Shin-i T."/>
            <person name="Nakagawa M."/>
            <person name="Sakamoto N."/>
            <person name="Oishi K."/>
            <person name="Kohara Y."/>
            <person name="Kobayashi M."/>
            <person name="Toyoda A."/>
            <person name="Sakaki Y."/>
            <person name="Sakurai T."/>
            <person name="Iida K."/>
            <person name="Akiyama K."/>
            <person name="Satou M."/>
            <person name="Toyoda T."/>
            <person name="Konagaya A."/>
            <person name="Carninci P."/>
            <person name="Kawai J."/>
            <person name="Hayashizaki Y."/>
            <person name="Shinozaki K."/>
        </authorList>
    </citation>
    <scope>NUCLEOTIDE SEQUENCE [LARGE SCALE MRNA]</scope>
    <source>
        <strain>cv. Columbia</strain>
    </source>
</reference>
<reference key="4">
    <citation type="submission" date="2006-02" db="EMBL/GenBank/DDBJ databases">
        <title>Arabidopsis ORF clones.</title>
        <authorList>
            <person name="Kim C.J."/>
            <person name="Chen H."/>
            <person name="Shinn P."/>
            <person name="Ecker J.R."/>
        </authorList>
    </citation>
    <scope>NUCLEOTIDE SEQUENCE [LARGE SCALE MRNA]</scope>
    <source>
        <strain>cv. Columbia</strain>
    </source>
</reference>
<reference key="5">
    <citation type="submission" date="2002-03" db="EMBL/GenBank/DDBJ databases">
        <title>Full-length cDNA from Arabidopsis thaliana.</title>
        <authorList>
            <person name="Brover V.V."/>
            <person name="Troukhan M.E."/>
            <person name="Alexandrov N.A."/>
            <person name="Lu Y.-P."/>
            <person name="Flavell R.B."/>
            <person name="Feldmann K.A."/>
        </authorList>
    </citation>
    <scope>NUCLEOTIDE SEQUENCE [LARGE SCALE MRNA]</scope>
</reference>
<reference key="6">
    <citation type="journal article" date="2001" name="Plant J.">
        <title>At-HSP17.6A, encoding a small heat-shock protein in Arabidopsis, can enhance osmotolerance upon overexpression.</title>
        <authorList>
            <person name="Sun W."/>
            <person name="Bernard C."/>
            <person name="van de Cotte B."/>
            <person name="Van Montagu M."/>
            <person name="Verbruggen N."/>
        </authorList>
    </citation>
    <scope>FUNCTION</scope>
    <scope>OLIGOMERIZATION</scope>
    <scope>DEVELOPMENTAL STAGE</scope>
    <scope>INDUCTION</scope>
</reference>
<reference key="7">
    <citation type="journal article" date="2011" name="Plant Physiol.">
        <title>Small heat shock protein Hsp17.8 functions as an AKR2A cofactor in the targeting of chloroplast outer membrane proteins in Arabidopsis.</title>
        <authorList>
            <person name="Kim D.H."/>
            <person name="Xu Z.-Y."/>
            <person name="Na Y.J."/>
            <person name="Yoo Y.-J."/>
            <person name="Lee J."/>
            <person name="Sohn E.-J."/>
            <person name="Hwang I."/>
        </authorList>
    </citation>
    <scope>INTERACTION WITH AKR2A</scope>
    <scope>INDUCTION BY HEAT SHOCK</scope>
    <source>
        <strain>cv. Columbia</strain>
    </source>
</reference>
<comment type="function">
    <text evidence="2 3">Possesses chaperone activity.</text>
</comment>
<comment type="subunit">
    <text evidence="3 4">Forms oligomeric structures (Probable). Binds to AKR2A (PubMed:21730198).</text>
</comment>
<comment type="subcellular location">
    <subcellularLocation>
        <location evidence="4">Cytoplasm</location>
    </subcellularLocation>
</comment>
<comment type="developmental stage">
    <text evidence="2">Expressed in seed development and germination from day 16 after pollination to day 4 after imbibition (at protein level).</text>
</comment>
<comment type="induction">
    <text evidence="2">By heat and osmotic shock and salt stress.</text>
</comment>
<comment type="similarity">
    <text evidence="1">Belongs to the small heat shock protein (HSP20) family.</text>
</comment>
<keyword id="KW-0963">Cytoplasm</keyword>
<keyword id="KW-1185">Reference proteome</keyword>
<keyword id="KW-0346">Stress response</keyword>
<feature type="chain" id="PRO_0000387483" description="17.6 kDa class I heat shock protein 1">
    <location>
        <begin position="1"/>
        <end position="155"/>
    </location>
</feature>
<feature type="domain" description="sHSP" evidence="1">
    <location>
        <begin position="39"/>
        <end position="154"/>
    </location>
</feature>
<feature type="sequence conflict" description="In Ref. 5; AAM64758." evidence="4" ref="5">
    <original>S</original>
    <variation>P</variation>
    <location>
        <position position="38"/>
    </location>
</feature>
<protein>
    <recommendedName>
        <fullName>17.6 kDa class I heat shock protein 1</fullName>
    </recommendedName>
    <alternativeName>
        <fullName>17.6 kDa heat shock protein 1</fullName>
        <shortName>AtHsp17.6A</shortName>
    </alternativeName>
</protein>
<evidence type="ECO:0000255" key="1">
    <source>
        <dbReference type="PROSITE-ProRule" id="PRU00285"/>
    </source>
</evidence>
<evidence type="ECO:0000269" key="2">
    <source>
    </source>
</evidence>
<evidence type="ECO:0000269" key="3">
    <source>
    </source>
</evidence>
<evidence type="ECO:0000305" key="4"/>
<gene>
    <name type="primary">HSP17.6A</name>
    <name type="ordered locus">At1g59860</name>
    <name type="ORF">F23H11.18</name>
</gene>
<proteinExistence type="evidence at protein level"/>
<organism>
    <name type="scientific">Arabidopsis thaliana</name>
    <name type="common">Mouse-ear cress</name>
    <dbReference type="NCBI Taxonomy" id="3702"/>
    <lineage>
        <taxon>Eukaryota</taxon>
        <taxon>Viridiplantae</taxon>
        <taxon>Streptophyta</taxon>
        <taxon>Embryophyta</taxon>
        <taxon>Tracheophyta</taxon>
        <taxon>Spermatophyta</taxon>
        <taxon>Magnoliopsida</taxon>
        <taxon>eudicotyledons</taxon>
        <taxon>Gunneridae</taxon>
        <taxon>Pentapetalae</taxon>
        <taxon>rosids</taxon>
        <taxon>malvids</taxon>
        <taxon>Brassicales</taxon>
        <taxon>Brassicaceae</taxon>
        <taxon>Camelineae</taxon>
        <taxon>Arabidopsis</taxon>
    </lineage>
</organism>
<name>HS17A_ARATH</name>